<reference key="1">
    <citation type="journal article" date="2011" name="J. Bacteriol.">
        <title>Comparative genomics of 28 Salmonella enterica isolates: evidence for CRISPR-mediated adaptive sublineage evolution.</title>
        <authorList>
            <person name="Fricke W.F."/>
            <person name="Mammel M.K."/>
            <person name="McDermott P.F."/>
            <person name="Tartera C."/>
            <person name="White D.G."/>
            <person name="Leclerc J.E."/>
            <person name="Ravel J."/>
            <person name="Cebula T.A."/>
        </authorList>
    </citation>
    <scope>NUCLEOTIDE SEQUENCE [LARGE SCALE GENOMIC DNA]</scope>
    <source>
        <strain>SL254</strain>
    </source>
</reference>
<dbReference type="EC" id="2.7.4.3" evidence="1"/>
<dbReference type="EMBL" id="CP001113">
    <property type="protein sequence ID" value="ACF63968.1"/>
    <property type="molecule type" value="Genomic_DNA"/>
</dbReference>
<dbReference type="RefSeq" id="WP_001220237.1">
    <property type="nucleotide sequence ID" value="NZ_CCMR01000003.1"/>
</dbReference>
<dbReference type="SMR" id="B4SWY1"/>
<dbReference type="KEGG" id="see:SNSL254_A0539"/>
<dbReference type="HOGENOM" id="CLU_032354_1_2_6"/>
<dbReference type="UniPathway" id="UPA00588">
    <property type="reaction ID" value="UER00649"/>
</dbReference>
<dbReference type="Proteomes" id="UP000008824">
    <property type="component" value="Chromosome"/>
</dbReference>
<dbReference type="GO" id="GO:0005737">
    <property type="term" value="C:cytoplasm"/>
    <property type="evidence" value="ECO:0007669"/>
    <property type="project" value="UniProtKB-SubCell"/>
</dbReference>
<dbReference type="GO" id="GO:0004017">
    <property type="term" value="F:adenylate kinase activity"/>
    <property type="evidence" value="ECO:0007669"/>
    <property type="project" value="UniProtKB-UniRule"/>
</dbReference>
<dbReference type="GO" id="GO:0005524">
    <property type="term" value="F:ATP binding"/>
    <property type="evidence" value="ECO:0007669"/>
    <property type="project" value="UniProtKB-UniRule"/>
</dbReference>
<dbReference type="GO" id="GO:0044209">
    <property type="term" value="P:AMP salvage"/>
    <property type="evidence" value="ECO:0007669"/>
    <property type="project" value="UniProtKB-UniRule"/>
</dbReference>
<dbReference type="CDD" id="cd01428">
    <property type="entry name" value="ADK"/>
    <property type="match status" value="1"/>
</dbReference>
<dbReference type="FunFam" id="3.40.50.300:FF:000106">
    <property type="entry name" value="Adenylate kinase mitochondrial"/>
    <property type="match status" value="1"/>
</dbReference>
<dbReference type="Gene3D" id="3.40.50.300">
    <property type="entry name" value="P-loop containing nucleotide triphosphate hydrolases"/>
    <property type="match status" value="1"/>
</dbReference>
<dbReference type="HAMAP" id="MF_00235">
    <property type="entry name" value="Adenylate_kinase_Adk"/>
    <property type="match status" value="1"/>
</dbReference>
<dbReference type="InterPro" id="IPR006259">
    <property type="entry name" value="Adenyl_kin_sub"/>
</dbReference>
<dbReference type="InterPro" id="IPR000850">
    <property type="entry name" value="Adenylat/UMP-CMP_kin"/>
</dbReference>
<dbReference type="InterPro" id="IPR033690">
    <property type="entry name" value="Adenylat_kinase_CS"/>
</dbReference>
<dbReference type="InterPro" id="IPR007862">
    <property type="entry name" value="Adenylate_kinase_lid-dom"/>
</dbReference>
<dbReference type="InterPro" id="IPR027417">
    <property type="entry name" value="P-loop_NTPase"/>
</dbReference>
<dbReference type="NCBIfam" id="TIGR01351">
    <property type="entry name" value="adk"/>
    <property type="match status" value="1"/>
</dbReference>
<dbReference type="NCBIfam" id="NF001379">
    <property type="entry name" value="PRK00279.1-1"/>
    <property type="match status" value="1"/>
</dbReference>
<dbReference type="NCBIfam" id="NF001380">
    <property type="entry name" value="PRK00279.1-2"/>
    <property type="match status" value="1"/>
</dbReference>
<dbReference type="NCBIfam" id="NF001381">
    <property type="entry name" value="PRK00279.1-3"/>
    <property type="match status" value="1"/>
</dbReference>
<dbReference type="NCBIfam" id="NF011100">
    <property type="entry name" value="PRK14527.1"/>
    <property type="match status" value="1"/>
</dbReference>
<dbReference type="PANTHER" id="PTHR23359">
    <property type="entry name" value="NUCLEOTIDE KINASE"/>
    <property type="match status" value="1"/>
</dbReference>
<dbReference type="Pfam" id="PF00406">
    <property type="entry name" value="ADK"/>
    <property type="match status" value="1"/>
</dbReference>
<dbReference type="Pfam" id="PF05191">
    <property type="entry name" value="ADK_lid"/>
    <property type="match status" value="1"/>
</dbReference>
<dbReference type="PRINTS" id="PR00094">
    <property type="entry name" value="ADENYLTKNASE"/>
</dbReference>
<dbReference type="SUPFAM" id="SSF52540">
    <property type="entry name" value="P-loop containing nucleoside triphosphate hydrolases"/>
    <property type="match status" value="1"/>
</dbReference>
<dbReference type="PROSITE" id="PS00113">
    <property type="entry name" value="ADENYLATE_KINASE"/>
    <property type="match status" value="1"/>
</dbReference>
<name>KAD_SALNS</name>
<protein>
    <recommendedName>
        <fullName evidence="1">Adenylate kinase</fullName>
        <shortName evidence="1">AK</shortName>
        <ecNumber evidence="1">2.7.4.3</ecNumber>
    </recommendedName>
    <alternativeName>
        <fullName evidence="1">ATP-AMP transphosphorylase</fullName>
    </alternativeName>
    <alternativeName>
        <fullName evidence="1">ATP:AMP phosphotransferase</fullName>
    </alternativeName>
    <alternativeName>
        <fullName evidence="1">Adenylate monophosphate kinase</fullName>
    </alternativeName>
</protein>
<proteinExistence type="inferred from homology"/>
<accession>B4SWY1</accession>
<comment type="function">
    <text evidence="1">Catalyzes the reversible transfer of the terminal phosphate group between ATP and AMP. Plays an important role in cellular energy homeostasis and in adenine nucleotide metabolism.</text>
</comment>
<comment type="catalytic activity">
    <reaction evidence="1">
        <text>AMP + ATP = 2 ADP</text>
        <dbReference type="Rhea" id="RHEA:12973"/>
        <dbReference type="ChEBI" id="CHEBI:30616"/>
        <dbReference type="ChEBI" id="CHEBI:456215"/>
        <dbReference type="ChEBI" id="CHEBI:456216"/>
        <dbReference type="EC" id="2.7.4.3"/>
    </reaction>
</comment>
<comment type="pathway">
    <text evidence="1">Purine metabolism; AMP biosynthesis via salvage pathway; AMP from ADP: step 1/1.</text>
</comment>
<comment type="subunit">
    <text evidence="1">Monomer.</text>
</comment>
<comment type="subcellular location">
    <subcellularLocation>
        <location evidence="1">Cytoplasm</location>
    </subcellularLocation>
</comment>
<comment type="domain">
    <text evidence="1">Consists of three domains, a large central CORE domain and two small peripheral domains, NMPbind and LID, which undergo movements during catalysis. The LID domain closes over the site of phosphoryl transfer upon ATP binding. Assembling and dissambling the active center during each catalytic cycle provides an effective means to prevent ATP hydrolysis.</text>
</comment>
<comment type="similarity">
    <text evidence="1">Belongs to the adenylate kinase family.</text>
</comment>
<organism>
    <name type="scientific">Salmonella newport (strain SL254)</name>
    <dbReference type="NCBI Taxonomy" id="423368"/>
    <lineage>
        <taxon>Bacteria</taxon>
        <taxon>Pseudomonadati</taxon>
        <taxon>Pseudomonadota</taxon>
        <taxon>Gammaproteobacteria</taxon>
        <taxon>Enterobacterales</taxon>
        <taxon>Enterobacteriaceae</taxon>
        <taxon>Salmonella</taxon>
    </lineage>
</organism>
<gene>
    <name evidence="1" type="primary">adk</name>
    <name type="ordered locus">SNSL254_A0539</name>
</gene>
<keyword id="KW-0067">ATP-binding</keyword>
<keyword id="KW-0963">Cytoplasm</keyword>
<keyword id="KW-0418">Kinase</keyword>
<keyword id="KW-0545">Nucleotide biosynthesis</keyword>
<keyword id="KW-0547">Nucleotide-binding</keyword>
<keyword id="KW-0808">Transferase</keyword>
<evidence type="ECO:0000255" key="1">
    <source>
        <dbReference type="HAMAP-Rule" id="MF_00235"/>
    </source>
</evidence>
<feature type="chain" id="PRO_1000100605" description="Adenylate kinase">
    <location>
        <begin position="1"/>
        <end position="214"/>
    </location>
</feature>
<feature type="region of interest" description="NMP" evidence="1">
    <location>
        <begin position="30"/>
        <end position="59"/>
    </location>
</feature>
<feature type="region of interest" description="LID">
    <location>
        <begin position="122"/>
        <end position="159"/>
    </location>
</feature>
<feature type="binding site" evidence="1">
    <location>
        <begin position="10"/>
        <end position="15"/>
    </location>
    <ligand>
        <name>ATP</name>
        <dbReference type="ChEBI" id="CHEBI:30616"/>
    </ligand>
</feature>
<feature type="binding site" evidence="1">
    <location>
        <position position="31"/>
    </location>
    <ligand>
        <name>AMP</name>
        <dbReference type="ChEBI" id="CHEBI:456215"/>
    </ligand>
</feature>
<feature type="binding site" evidence="1">
    <location>
        <position position="36"/>
    </location>
    <ligand>
        <name>AMP</name>
        <dbReference type="ChEBI" id="CHEBI:456215"/>
    </ligand>
</feature>
<feature type="binding site" evidence="1">
    <location>
        <begin position="57"/>
        <end position="59"/>
    </location>
    <ligand>
        <name>AMP</name>
        <dbReference type="ChEBI" id="CHEBI:456215"/>
    </ligand>
</feature>
<feature type="binding site" evidence="1">
    <location>
        <begin position="85"/>
        <end position="88"/>
    </location>
    <ligand>
        <name>AMP</name>
        <dbReference type="ChEBI" id="CHEBI:456215"/>
    </ligand>
</feature>
<feature type="binding site" evidence="1">
    <location>
        <position position="92"/>
    </location>
    <ligand>
        <name>AMP</name>
        <dbReference type="ChEBI" id="CHEBI:456215"/>
    </ligand>
</feature>
<feature type="binding site" evidence="1">
    <location>
        <position position="123"/>
    </location>
    <ligand>
        <name>ATP</name>
        <dbReference type="ChEBI" id="CHEBI:30616"/>
    </ligand>
</feature>
<feature type="binding site" evidence="1">
    <location>
        <begin position="132"/>
        <end position="133"/>
    </location>
    <ligand>
        <name>ATP</name>
        <dbReference type="ChEBI" id="CHEBI:30616"/>
    </ligand>
</feature>
<feature type="binding site" evidence="1">
    <location>
        <position position="156"/>
    </location>
    <ligand>
        <name>AMP</name>
        <dbReference type="ChEBI" id="CHEBI:456215"/>
    </ligand>
</feature>
<feature type="binding site" evidence="1">
    <location>
        <position position="167"/>
    </location>
    <ligand>
        <name>AMP</name>
        <dbReference type="ChEBI" id="CHEBI:456215"/>
    </ligand>
</feature>
<feature type="binding site" evidence="1">
    <location>
        <position position="200"/>
    </location>
    <ligand>
        <name>ATP</name>
        <dbReference type="ChEBI" id="CHEBI:30616"/>
    </ligand>
</feature>
<sequence length="214" mass="23488">MRIILLGAPGAGKGTQAQFIMEKYGIPQISTGDMLRAAVKSGSELGKQAKDIMDAGKLVTDELVIALVKERIAQEDCRNGFLLDGFPRTIPQADAMKEAGIVVDYVLEFDVPDELIVDRIVGRRVHAASGRVYHVKFNPPKVEGKDDVTGEDLTTRKDDQEETVRKRLVEYHQMTAPLIGYYQKEAEAGNTKYAKVDGTQAVADVRAALEKILG</sequence>